<accession>P47469</accession>
<reference key="1">
    <citation type="journal article" date="1995" name="Science">
        <title>The minimal gene complement of Mycoplasma genitalium.</title>
        <authorList>
            <person name="Fraser C.M."/>
            <person name="Gocayne J.D."/>
            <person name="White O."/>
            <person name="Adams M.D."/>
            <person name="Clayton R.A."/>
            <person name="Fleischmann R.D."/>
            <person name="Bult C.J."/>
            <person name="Kerlavage A.R."/>
            <person name="Sutton G.G."/>
            <person name="Kelley J.M."/>
            <person name="Fritchman J.L."/>
            <person name="Weidman J.F."/>
            <person name="Small K.V."/>
            <person name="Sandusky M."/>
            <person name="Fuhrmann J.L."/>
            <person name="Nguyen D.T."/>
            <person name="Utterback T.R."/>
            <person name="Saudek D.M."/>
            <person name="Phillips C.A."/>
            <person name="Merrick J.M."/>
            <person name="Tomb J.-F."/>
            <person name="Dougherty B.A."/>
            <person name="Bott K.F."/>
            <person name="Hu P.-C."/>
            <person name="Lucier T.S."/>
            <person name="Peterson S.N."/>
            <person name="Smith H.O."/>
            <person name="Hutchison C.A. III"/>
            <person name="Venter J.C."/>
        </authorList>
    </citation>
    <scope>NUCLEOTIDE SEQUENCE [LARGE SCALE GENOMIC DNA]</scope>
    <source>
        <strain>ATCC 33530 / DSM 19775 / NCTC 10195 / G37</strain>
    </source>
</reference>
<reference key="2">
    <citation type="journal article" date="1993" name="J. Bacteriol.">
        <title>A survey of the Mycoplasma genitalium genome by using random sequencing.</title>
        <authorList>
            <person name="Peterson S.N."/>
            <person name="Hu P.-C."/>
            <person name="Bott K.F."/>
            <person name="Hutchison C.A. III"/>
        </authorList>
    </citation>
    <scope>NUCLEOTIDE SEQUENCE [GENOMIC DNA] OF 193-287</scope>
    <source>
        <strain>ATCC 33530 / DSM 19775 / NCTC 10195 / G37</strain>
    </source>
</reference>
<dbReference type="EC" id="2.1.1.45" evidence="1"/>
<dbReference type="EMBL" id="L43967">
    <property type="protein sequence ID" value="AAC71448.1"/>
    <property type="molecule type" value="Genomic_DNA"/>
</dbReference>
<dbReference type="EMBL" id="U01718">
    <property type="protein sequence ID" value="AAC43192.1"/>
    <property type="molecule type" value="Unassigned_DNA"/>
</dbReference>
<dbReference type="PIR" id="A64225">
    <property type="entry name" value="A64225"/>
</dbReference>
<dbReference type="RefSeq" id="WP_010869385.1">
    <property type="nucleotide sequence ID" value="NC_000908.2"/>
</dbReference>
<dbReference type="SMR" id="P47469"/>
<dbReference type="FunCoup" id="P47469">
    <property type="interactions" value="129"/>
</dbReference>
<dbReference type="STRING" id="243273.MG_227"/>
<dbReference type="GeneID" id="88282373"/>
<dbReference type="KEGG" id="mge:MG_227"/>
<dbReference type="eggNOG" id="COG0207">
    <property type="taxonomic scope" value="Bacteria"/>
</dbReference>
<dbReference type="HOGENOM" id="CLU_021669_0_0_14"/>
<dbReference type="InParanoid" id="P47469"/>
<dbReference type="OrthoDB" id="9774633at2"/>
<dbReference type="BioCyc" id="MGEN243273:G1GJ2-274-MONOMER"/>
<dbReference type="UniPathway" id="UPA00575"/>
<dbReference type="Proteomes" id="UP000000807">
    <property type="component" value="Chromosome"/>
</dbReference>
<dbReference type="GO" id="GO:0005829">
    <property type="term" value="C:cytosol"/>
    <property type="evidence" value="ECO:0000318"/>
    <property type="project" value="GO_Central"/>
</dbReference>
<dbReference type="GO" id="GO:0004799">
    <property type="term" value="F:thymidylate synthase activity"/>
    <property type="evidence" value="ECO:0000318"/>
    <property type="project" value="GO_Central"/>
</dbReference>
<dbReference type="GO" id="GO:0006231">
    <property type="term" value="P:dTMP biosynthetic process"/>
    <property type="evidence" value="ECO:0000318"/>
    <property type="project" value="GO_Central"/>
</dbReference>
<dbReference type="GO" id="GO:0006235">
    <property type="term" value="P:dTTP biosynthetic process"/>
    <property type="evidence" value="ECO:0007669"/>
    <property type="project" value="UniProtKB-UniRule"/>
</dbReference>
<dbReference type="GO" id="GO:0032259">
    <property type="term" value="P:methylation"/>
    <property type="evidence" value="ECO:0007669"/>
    <property type="project" value="UniProtKB-KW"/>
</dbReference>
<dbReference type="CDD" id="cd00351">
    <property type="entry name" value="TS_Pyrimidine_HMase"/>
    <property type="match status" value="1"/>
</dbReference>
<dbReference type="FunFam" id="3.30.572.10:FF:000009">
    <property type="entry name" value="Thymidylate synthase"/>
    <property type="match status" value="1"/>
</dbReference>
<dbReference type="Gene3D" id="3.30.572.10">
    <property type="entry name" value="Thymidylate synthase/dCMP hydroxymethylase domain"/>
    <property type="match status" value="1"/>
</dbReference>
<dbReference type="HAMAP" id="MF_00008">
    <property type="entry name" value="Thymidy_synth_bact"/>
    <property type="match status" value="1"/>
</dbReference>
<dbReference type="InterPro" id="IPR045097">
    <property type="entry name" value="Thymidate_synth/dCMP_Mease"/>
</dbReference>
<dbReference type="InterPro" id="IPR023451">
    <property type="entry name" value="Thymidate_synth/dCMP_Mease_dom"/>
</dbReference>
<dbReference type="InterPro" id="IPR036926">
    <property type="entry name" value="Thymidate_synth/dCMP_Mease_sf"/>
</dbReference>
<dbReference type="InterPro" id="IPR000398">
    <property type="entry name" value="Thymidylate_synthase"/>
</dbReference>
<dbReference type="InterPro" id="IPR020940">
    <property type="entry name" value="Thymidylate_synthase_AS"/>
</dbReference>
<dbReference type="NCBIfam" id="NF002496">
    <property type="entry name" value="PRK01827.1-2"/>
    <property type="match status" value="1"/>
</dbReference>
<dbReference type="NCBIfam" id="NF002497">
    <property type="entry name" value="PRK01827.1-3"/>
    <property type="match status" value="1"/>
</dbReference>
<dbReference type="NCBIfam" id="TIGR03284">
    <property type="entry name" value="thym_sym"/>
    <property type="match status" value="1"/>
</dbReference>
<dbReference type="PANTHER" id="PTHR11548:SF9">
    <property type="entry name" value="THYMIDYLATE SYNTHASE"/>
    <property type="match status" value="1"/>
</dbReference>
<dbReference type="PANTHER" id="PTHR11548">
    <property type="entry name" value="THYMIDYLATE SYNTHASE 1"/>
    <property type="match status" value="1"/>
</dbReference>
<dbReference type="Pfam" id="PF00303">
    <property type="entry name" value="Thymidylat_synt"/>
    <property type="match status" value="1"/>
</dbReference>
<dbReference type="PRINTS" id="PR00108">
    <property type="entry name" value="THYMDSNTHASE"/>
</dbReference>
<dbReference type="SUPFAM" id="SSF55831">
    <property type="entry name" value="Thymidylate synthase/dCMP hydroxymethylase"/>
    <property type="match status" value="1"/>
</dbReference>
<dbReference type="PROSITE" id="PS00091">
    <property type="entry name" value="THYMIDYLATE_SYNTHASE"/>
    <property type="match status" value="1"/>
</dbReference>
<proteinExistence type="inferred from homology"/>
<name>TYSY_MYCGE</name>
<protein>
    <recommendedName>
        <fullName evidence="1">Thymidylate synthase</fullName>
        <shortName evidence="1">TS</shortName>
        <shortName evidence="1">TSase</shortName>
        <ecNumber evidence="1">2.1.1.45</ecNumber>
    </recommendedName>
</protein>
<feature type="chain" id="PRO_0000140983" description="Thymidylate synthase">
    <location>
        <begin position="1"/>
        <end position="287"/>
    </location>
</feature>
<feature type="active site" description="Nucleophile" evidence="1">
    <location>
        <position position="170"/>
    </location>
</feature>
<feature type="binding site" description="in other chain" evidence="1">
    <location>
        <position position="21"/>
    </location>
    <ligand>
        <name>dUMP</name>
        <dbReference type="ChEBI" id="CHEBI:246422"/>
        <note>ligand shared between dimeric partners</note>
    </ligand>
</feature>
<feature type="binding site" evidence="1">
    <location>
        <position position="51"/>
    </location>
    <ligand>
        <name>(6R)-5,10-methylene-5,6,7,8-tetrahydrofolate</name>
        <dbReference type="ChEBI" id="CHEBI:15636"/>
    </ligand>
</feature>
<feature type="binding site" evidence="1">
    <location>
        <begin position="150"/>
        <end position="151"/>
    </location>
    <ligand>
        <name>dUMP</name>
        <dbReference type="ChEBI" id="CHEBI:246422"/>
        <note>ligand shared between dimeric partners</note>
    </ligand>
</feature>
<feature type="binding site" description="in other chain" evidence="1">
    <location>
        <begin position="190"/>
        <end position="193"/>
    </location>
    <ligand>
        <name>dUMP</name>
        <dbReference type="ChEBI" id="CHEBI:246422"/>
        <note>ligand shared between dimeric partners</note>
    </ligand>
</feature>
<feature type="binding site" evidence="1">
    <location>
        <position position="193"/>
    </location>
    <ligand>
        <name>(6R)-5,10-methylene-5,6,7,8-tetrahydrofolate</name>
        <dbReference type="ChEBI" id="CHEBI:15636"/>
    </ligand>
</feature>
<feature type="binding site" description="in other chain" evidence="1">
    <location>
        <position position="201"/>
    </location>
    <ligand>
        <name>dUMP</name>
        <dbReference type="ChEBI" id="CHEBI:246422"/>
        <note>ligand shared between dimeric partners</note>
    </ligand>
</feature>
<feature type="binding site" description="in other chain" evidence="1">
    <location>
        <begin position="231"/>
        <end position="233"/>
    </location>
    <ligand>
        <name>dUMP</name>
        <dbReference type="ChEBI" id="CHEBI:246422"/>
        <note>ligand shared between dimeric partners</note>
    </ligand>
</feature>
<feature type="binding site" evidence="1">
    <location>
        <position position="286"/>
    </location>
    <ligand>
        <name>(6R)-5,10-methylene-5,6,7,8-tetrahydrofolate</name>
        <dbReference type="ChEBI" id="CHEBI:15636"/>
    </ligand>
</feature>
<organism>
    <name type="scientific">Mycoplasma genitalium (strain ATCC 33530 / DSM 19775 / NCTC 10195 / G37)</name>
    <name type="common">Mycoplasmoides genitalium</name>
    <dbReference type="NCBI Taxonomy" id="243273"/>
    <lineage>
        <taxon>Bacteria</taxon>
        <taxon>Bacillati</taxon>
        <taxon>Mycoplasmatota</taxon>
        <taxon>Mycoplasmoidales</taxon>
        <taxon>Mycoplasmoidaceae</taxon>
        <taxon>Mycoplasmoides</taxon>
    </lineage>
</organism>
<comment type="function">
    <text evidence="1">Catalyzes the reductive methylation of 2'-deoxyuridine-5'-monophosphate (dUMP) to 2'-deoxythymidine-5'-monophosphate (dTMP) while utilizing 5,10-methylenetetrahydrofolate (mTHF) as the methyl donor and reductant in the reaction, yielding dihydrofolate (DHF) as a by-product. This enzymatic reaction provides an intracellular de novo source of dTMP, an essential precursor for DNA biosynthesis.</text>
</comment>
<comment type="catalytic activity">
    <reaction evidence="1">
        <text>dUMP + (6R)-5,10-methylene-5,6,7,8-tetrahydrofolate = 7,8-dihydrofolate + dTMP</text>
        <dbReference type="Rhea" id="RHEA:12104"/>
        <dbReference type="ChEBI" id="CHEBI:15636"/>
        <dbReference type="ChEBI" id="CHEBI:57451"/>
        <dbReference type="ChEBI" id="CHEBI:63528"/>
        <dbReference type="ChEBI" id="CHEBI:246422"/>
        <dbReference type="EC" id="2.1.1.45"/>
    </reaction>
</comment>
<comment type="pathway">
    <text evidence="1">Pyrimidine metabolism; dTTP biosynthesis.</text>
</comment>
<comment type="subunit">
    <text evidence="1">Homodimer.</text>
</comment>
<comment type="subcellular location">
    <subcellularLocation>
        <location evidence="1">Cytoplasm</location>
    </subcellularLocation>
</comment>
<comment type="similarity">
    <text evidence="1">Belongs to the thymidylate synthase family. Bacterial-type ThyA subfamily.</text>
</comment>
<sequence>MKQYLDLASYVLANGKKRKNRTDTDTLSVFGYQMKFDLTNSFPLLTTKKVNWKAIVHELLWFIKGDTNIKYLVDNGVNIWNEWPYENFKKSPSFQNETLQEFILKVKTDNEFAKQFADLGPVYGKQWRNFNGVDQLKKVIQEIKENPNSRRLIVSSWNPSELEKMALAPCHSLFQFYVEEDKLSLQLYQRSGDIFLGVPFNIASYALLVYLVAHETKLKPGYFIHTLGDAHIYENHIEQIKLQLTRTTLDPPQVVLKSDKSIFAYSFDDIELVGYNYHPFIYGRVAV</sequence>
<evidence type="ECO:0000255" key="1">
    <source>
        <dbReference type="HAMAP-Rule" id="MF_00008"/>
    </source>
</evidence>
<keyword id="KW-0963">Cytoplasm</keyword>
<keyword id="KW-0489">Methyltransferase</keyword>
<keyword id="KW-0545">Nucleotide biosynthesis</keyword>
<keyword id="KW-1185">Reference proteome</keyword>
<keyword id="KW-0808">Transferase</keyword>
<gene>
    <name evidence="1" type="primary">thyA</name>
    <name type="ordered locus">MG227</name>
</gene>